<sequence>MQEWFQNLFAATLGLGDLGITVGLVVSVIVKIVIILIPLILTVAYLTYFERKVIGFMQLRVGPNVTGPWGLIQPFADVFKLLFKEVTRPRLSNKALFYIGPIMSLAPSFAAWAVIPFNEEWVLTNINIGLLYILMITSLSVYGVIIAGWASNSKYSFLGAMRASAQSISYEIAMSAALVCVVMVSGSMNFSDIVAAQAKGIAGGSVFSWNWLPLFPIFIVYLISAVAETNRAPFDVAEGESEIVAGHHVEYSGFAFALFFLAEYIFMILISALTSLMFLGGWLSPFPQSWGFIGTPSAFWMFVKMAAVLYWYLWIRATFPRYRYDQIMRLGWKVLIPIGFAYIVILGLWMISPLNLWK</sequence>
<gene>
    <name evidence="1" type="primary">nuoH</name>
    <name type="ordered locus">NMA0009</name>
</gene>
<dbReference type="EC" id="7.1.1.-" evidence="1"/>
<dbReference type="EMBL" id="AL157959">
    <property type="protein sequence ID" value="CAM07338.1"/>
    <property type="molecule type" value="Genomic_DNA"/>
</dbReference>
<dbReference type="PIR" id="E81991">
    <property type="entry name" value="E81991"/>
</dbReference>
<dbReference type="RefSeq" id="WP_002245827.1">
    <property type="nucleotide sequence ID" value="NC_003116.1"/>
</dbReference>
<dbReference type="SMR" id="Q9JX88"/>
<dbReference type="EnsemblBacteria" id="CAM07338">
    <property type="protein sequence ID" value="CAM07338"/>
    <property type="gene ID" value="NMA0009"/>
</dbReference>
<dbReference type="GeneID" id="93387337"/>
<dbReference type="KEGG" id="nma:NMA0009"/>
<dbReference type="HOGENOM" id="CLU_015134_0_1_4"/>
<dbReference type="Proteomes" id="UP000000626">
    <property type="component" value="Chromosome"/>
</dbReference>
<dbReference type="GO" id="GO:0005886">
    <property type="term" value="C:plasma membrane"/>
    <property type="evidence" value="ECO:0007669"/>
    <property type="project" value="UniProtKB-SubCell"/>
</dbReference>
<dbReference type="GO" id="GO:0003954">
    <property type="term" value="F:NADH dehydrogenase activity"/>
    <property type="evidence" value="ECO:0007669"/>
    <property type="project" value="TreeGrafter"/>
</dbReference>
<dbReference type="GO" id="GO:0016655">
    <property type="term" value="F:oxidoreductase activity, acting on NAD(P)H, quinone or similar compound as acceptor"/>
    <property type="evidence" value="ECO:0007669"/>
    <property type="project" value="UniProtKB-UniRule"/>
</dbReference>
<dbReference type="GO" id="GO:0048038">
    <property type="term" value="F:quinone binding"/>
    <property type="evidence" value="ECO:0007669"/>
    <property type="project" value="UniProtKB-KW"/>
</dbReference>
<dbReference type="GO" id="GO:0009060">
    <property type="term" value="P:aerobic respiration"/>
    <property type="evidence" value="ECO:0007669"/>
    <property type="project" value="TreeGrafter"/>
</dbReference>
<dbReference type="HAMAP" id="MF_01350">
    <property type="entry name" value="NDH1_NuoH"/>
    <property type="match status" value="1"/>
</dbReference>
<dbReference type="InterPro" id="IPR001694">
    <property type="entry name" value="NADH_UbQ_OxRdtase_su1/FPO"/>
</dbReference>
<dbReference type="InterPro" id="IPR018086">
    <property type="entry name" value="NADH_UbQ_OxRdtase_su1_CS"/>
</dbReference>
<dbReference type="NCBIfam" id="NF004741">
    <property type="entry name" value="PRK06076.1-2"/>
    <property type="match status" value="1"/>
</dbReference>
<dbReference type="PANTHER" id="PTHR11432">
    <property type="entry name" value="NADH DEHYDROGENASE SUBUNIT 1"/>
    <property type="match status" value="1"/>
</dbReference>
<dbReference type="PANTHER" id="PTHR11432:SF3">
    <property type="entry name" value="NADH-UBIQUINONE OXIDOREDUCTASE CHAIN 1"/>
    <property type="match status" value="1"/>
</dbReference>
<dbReference type="Pfam" id="PF00146">
    <property type="entry name" value="NADHdh"/>
    <property type="match status" value="1"/>
</dbReference>
<dbReference type="PROSITE" id="PS00668">
    <property type="entry name" value="COMPLEX1_ND1_2"/>
    <property type="match status" value="1"/>
</dbReference>
<organism>
    <name type="scientific">Neisseria meningitidis serogroup A / serotype 4A (strain DSM 15465 / Z2491)</name>
    <dbReference type="NCBI Taxonomy" id="122587"/>
    <lineage>
        <taxon>Bacteria</taxon>
        <taxon>Pseudomonadati</taxon>
        <taxon>Pseudomonadota</taxon>
        <taxon>Betaproteobacteria</taxon>
        <taxon>Neisseriales</taxon>
        <taxon>Neisseriaceae</taxon>
        <taxon>Neisseria</taxon>
    </lineage>
</organism>
<comment type="function">
    <text evidence="1">NDH-1 shuttles electrons from NADH, via FMN and iron-sulfur (Fe-S) centers, to quinones in the respiratory chain. The immediate electron acceptor for the enzyme in this species is believed to be ubiquinone. Couples the redox reaction to proton translocation (for every two electrons transferred, four hydrogen ions are translocated across the cytoplasmic membrane), and thus conserves the redox energy in a proton gradient. This subunit may bind ubiquinone.</text>
</comment>
<comment type="catalytic activity">
    <reaction evidence="1">
        <text>a quinone + NADH + 5 H(+)(in) = a quinol + NAD(+) + 4 H(+)(out)</text>
        <dbReference type="Rhea" id="RHEA:57888"/>
        <dbReference type="ChEBI" id="CHEBI:15378"/>
        <dbReference type="ChEBI" id="CHEBI:24646"/>
        <dbReference type="ChEBI" id="CHEBI:57540"/>
        <dbReference type="ChEBI" id="CHEBI:57945"/>
        <dbReference type="ChEBI" id="CHEBI:132124"/>
    </reaction>
</comment>
<comment type="subunit">
    <text evidence="1">NDH-1 is composed of 14 different subunits. Subunits NuoA, H, J, K, L, M, N constitute the membrane sector of the complex.</text>
</comment>
<comment type="subcellular location">
    <subcellularLocation>
        <location evidence="1">Cell inner membrane</location>
        <topology evidence="1">Multi-pass membrane protein</topology>
    </subcellularLocation>
</comment>
<comment type="similarity">
    <text evidence="1">Belongs to the complex I subunit 1 family.</text>
</comment>
<proteinExistence type="inferred from homology"/>
<keyword id="KW-0997">Cell inner membrane</keyword>
<keyword id="KW-1003">Cell membrane</keyword>
<keyword id="KW-0472">Membrane</keyword>
<keyword id="KW-0520">NAD</keyword>
<keyword id="KW-0874">Quinone</keyword>
<keyword id="KW-1278">Translocase</keyword>
<keyword id="KW-0812">Transmembrane</keyword>
<keyword id="KW-1133">Transmembrane helix</keyword>
<keyword id="KW-0830">Ubiquinone</keyword>
<name>NUOH_NEIMA</name>
<feature type="chain" id="PRO_0000240087" description="NADH-quinone oxidoreductase subunit H">
    <location>
        <begin position="1"/>
        <end position="358"/>
    </location>
</feature>
<feature type="transmembrane region" description="Helical" evidence="1">
    <location>
        <begin position="20"/>
        <end position="40"/>
    </location>
</feature>
<feature type="transmembrane region" description="Helical" evidence="1">
    <location>
        <begin position="95"/>
        <end position="115"/>
    </location>
</feature>
<feature type="transmembrane region" description="Helical" evidence="1">
    <location>
        <begin position="128"/>
        <end position="148"/>
    </location>
</feature>
<feature type="transmembrane region" description="Helical" evidence="1">
    <location>
        <begin position="168"/>
        <end position="188"/>
    </location>
</feature>
<feature type="transmembrane region" description="Helical" evidence="1">
    <location>
        <begin position="206"/>
        <end position="226"/>
    </location>
</feature>
<feature type="transmembrane region" description="Helical" evidence="1">
    <location>
        <begin position="253"/>
        <end position="273"/>
    </location>
</feature>
<feature type="transmembrane region" description="Helical" evidence="1">
    <location>
        <begin position="290"/>
        <end position="310"/>
    </location>
</feature>
<feature type="transmembrane region" description="Helical" evidence="1">
    <location>
        <begin position="334"/>
        <end position="354"/>
    </location>
</feature>
<evidence type="ECO:0000255" key="1">
    <source>
        <dbReference type="HAMAP-Rule" id="MF_01350"/>
    </source>
</evidence>
<reference key="1">
    <citation type="journal article" date="2000" name="Nature">
        <title>Complete DNA sequence of a serogroup A strain of Neisseria meningitidis Z2491.</title>
        <authorList>
            <person name="Parkhill J."/>
            <person name="Achtman M."/>
            <person name="James K.D."/>
            <person name="Bentley S.D."/>
            <person name="Churcher C.M."/>
            <person name="Klee S.R."/>
            <person name="Morelli G."/>
            <person name="Basham D."/>
            <person name="Brown D."/>
            <person name="Chillingworth T."/>
            <person name="Davies R.M."/>
            <person name="Davis P."/>
            <person name="Devlin K."/>
            <person name="Feltwell T."/>
            <person name="Hamlin N."/>
            <person name="Holroyd S."/>
            <person name="Jagels K."/>
            <person name="Leather S."/>
            <person name="Moule S."/>
            <person name="Mungall K.L."/>
            <person name="Quail M.A."/>
            <person name="Rajandream M.A."/>
            <person name="Rutherford K.M."/>
            <person name="Simmonds M."/>
            <person name="Skelton J."/>
            <person name="Whitehead S."/>
            <person name="Spratt B.G."/>
            <person name="Barrell B.G."/>
        </authorList>
    </citation>
    <scope>NUCLEOTIDE SEQUENCE [LARGE SCALE GENOMIC DNA]</scope>
    <source>
        <strain>DSM 15465 / Z2491</strain>
    </source>
</reference>
<accession>Q9JX88</accession>
<accession>A1INN1</accession>
<protein>
    <recommendedName>
        <fullName evidence="1">NADH-quinone oxidoreductase subunit H</fullName>
        <ecNumber evidence="1">7.1.1.-</ecNumber>
    </recommendedName>
    <alternativeName>
        <fullName evidence="1">NADH dehydrogenase I subunit H</fullName>
    </alternativeName>
    <alternativeName>
        <fullName evidence="1">NDH-1 subunit H</fullName>
    </alternativeName>
</protein>